<name>RS14_METFK</name>
<comment type="function">
    <text evidence="1">Binds 16S rRNA, required for the assembly of 30S particles and may also be responsible for determining the conformation of the 16S rRNA at the A site.</text>
</comment>
<comment type="subunit">
    <text evidence="1">Part of the 30S ribosomal subunit. Contacts proteins S3 and S10.</text>
</comment>
<comment type="similarity">
    <text evidence="1">Belongs to the universal ribosomal protein uS14 family.</text>
</comment>
<proteinExistence type="inferred from homology"/>
<keyword id="KW-1185">Reference proteome</keyword>
<keyword id="KW-0687">Ribonucleoprotein</keyword>
<keyword id="KW-0689">Ribosomal protein</keyword>
<keyword id="KW-0694">RNA-binding</keyword>
<keyword id="KW-0699">rRNA-binding</keyword>
<protein>
    <recommendedName>
        <fullName evidence="1">Small ribosomal subunit protein uS14</fullName>
    </recommendedName>
    <alternativeName>
        <fullName evidence="3">30S ribosomal protein S14</fullName>
    </alternativeName>
</protein>
<sequence length="101" mass="11484">MAKICMIEREQKRRDTVKKYAAKRAELLAVINDANASAEDRRAARQKLQSLPRNSSPVRQRNRCALTGRPRGVFSKFGIARSKLRELMMRGEVPGVTKASW</sequence>
<feature type="chain" id="PRO_1000128446" description="Small ribosomal subunit protein uS14">
    <location>
        <begin position="1"/>
        <end position="101"/>
    </location>
</feature>
<feature type="region of interest" description="Disordered" evidence="2">
    <location>
        <begin position="36"/>
        <end position="61"/>
    </location>
</feature>
<feature type="compositionally biased region" description="Polar residues" evidence="2">
    <location>
        <begin position="47"/>
        <end position="59"/>
    </location>
</feature>
<evidence type="ECO:0000255" key="1">
    <source>
        <dbReference type="HAMAP-Rule" id="MF_00537"/>
    </source>
</evidence>
<evidence type="ECO:0000256" key="2">
    <source>
        <dbReference type="SAM" id="MobiDB-lite"/>
    </source>
</evidence>
<evidence type="ECO:0000305" key="3"/>
<reference key="1">
    <citation type="submission" date="2006-03" db="EMBL/GenBank/DDBJ databases">
        <title>Complete sequence of Methylobacillus flagellatus KT.</title>
        <authorList>
            <consortium name="US DOE Joint Genome Institute"/>
            <person name="Copeland A."/>
            <person name="Lucas S."/>
            <person name="Lapidus A."/>
            <person name="Barry K."/>
            <person name="Detter J.C."/>
            <person name="Glavina del Rio T."/>
            <person name="Hammon N."/>
            <person name="Israni S."/>
            <person name="Dalin E."/>
            <person name="Tice H."/>
            <person name="Pitluck S."/>
            <person name="Brettin T."/>
            <person name="Bruce D."/>
            <person name="Han C."/>
            <person name="Tapia R."/>
            <person name="Saunders E."/>
            <person name="Gilna P."/>
            <person name="Schmutz J."/>
            <person name="Larimer F."/>
            <person name="Land M."/>
            <person name="Kyrpides N."/>
            <person name="Anderson I."/>
            <person name="Richardson P."/>
        </authorList>
    </citation>
    <scope>NUCLEOTIDE SEQUENCE [LARGE SCALE GENOMIC DNA]</scope>
    <source>
        <strain>ATCC 51484 / DSM 6875 / VKM B-1610 / KT</strain>
    </source>
</reference>
<gene>
    <name evidence="1" type="primary">rpsN</name>
    <name type="ordered locus">Mfla_0292</name>
</gene>
<dbReference type="EMBL" id="CP000284">
    <property type="protein sequence ID" value="ABE48563.1"/>
    <property type="molecule type" value="Genomic_DNA"/>
</dbReference>
<dbReference type="RefSeq" id="WP_011478660.1">
    <property type="nucleotide sequence ID" value="NC_007947.1"/>
</dbReference>
<dbReference type="SMR" id="Q1H4M4"/>
<dbReference type="STRING" id="265072.Mfla_0292"/>
<dbReference type="KEGG" id="mfa:Mfla_0292"/>
<dbReference type="eggNOG" id="COG0199">
    <property type="taxonomic scope" value="Bacteria"/>
</dbReference>
<dbReference type="HOGENOM" id="CLU_139869_0_1_4"/>
<dbReference type="OrthoDB" id="9810484at2"/>
<dbReference type="Proteomes" id="UP000002440">
    <property type="component" value="Chromosome"/>
</dbReference>
<dbReference type="GO" id="GO:0005737">
    <property type="term" value="C:cytoplasm"/>
    <property type="evidence" value="ECO:0007669"/>
    <property type="project" value="UniProtKB-ARBA"/>
</dbReference>
<dbReference type="GO" id="GO:0015935">
    <property type="term" value="C:small ribosomal subunit"/>
    <property type="evidence" value="ECO:0007669"/>
    <property type="project" value="TreeGrafter"/>
</dbReference>
<dbReference type="GO" id="GO:0019843">
    <property type="term" value="F:rRNA binding"/>
    <property type="evidence" value="ECO:0007669"/>
    <property type="project" value="UniProtKB-UniRule"/>
</dbReference>
<dbReference type="GO" id="GO:0003735">
    <property type="term" value="F:structural constituent of ribosome"/>
    <property type="evidence" value="ECO:0007669"/>
    <property type="project" value="InterPro"/>
</dbReference>
<dbReference type="GO" id="GO:0006412">
    <property type="term" value="P:translation"/>
    <property type="evidence" value="ECO:0007669"/>
    <property type="project" value="UniProtKB-UniRule"/>
</dbReference>
<dbReference type="FunFam" id="1.10.287.1480:FF:000001">
    <property type="entry name" value="30S ribosomal protein S14"/>
    <property type="match status" value="1"/>
</dbReference>
<dbReference type="Gene3D" id="1.10.287.1480">
    <property type="match status" value="1"/>
</dbReference>
<dbReference type="HAMAP" id="MF_00537">
    <property type="entry name" value="Ribosomal_uS14_1"/>
    <property type="match status" value="1"/>
</dbReference>
<dbReference type="InterPro" id="IPR001209">
    <property type="entry name" value="Ribosomal_uS14"/>
</dbReference>
<dbReference type="InterPro" id="IPR023036">
    <property type="entry name" value="Ribosomal_uS14_bac/plastid"/>
</dbReference>
<dbReference type="NCBIfam" id="NF006477">
    <property type="entry name" value="PRK08881.1"/>
    <property type="match status" value="1"/>
</dbReference>
<dbReference type="PANTHER" id="PTHR19836">
    <property type="entry name" value="30S RIBOSOMAL PROTEIN S14"/>
    <property type="match status" value="1"/>
</dbReference>
<dbReference type="PANTHER" id="PTHR19836:SF19">
    <property type="entry name" value="SMALL RIBOSOMAL SUBUNIT PROTEIN US14M"/>
    <property type="match status" value="1"/>
</dbReference>
<dbReference type="Pfam" id="PF00253">
    <property type="entry name" value="Ribosomal_S14"/>
    <property type="match status" value="1"/>
</dbReference>
<dbReference type="SUPFAM" id="SSF57716">
    <property type="entry name" value="Glucocorticoid receptor-like (DNA-binding domain)"/>
    <property type="match status" value="1"/>
</dbReference>
<organism>
    <name type="scientific">Methylobacillus flagellatus (strain ATCC 51484 / DSM 6875 / VKM B-1610 / KT)</name>
    <dbReference type="NCBI Taxonomy" id="265072"/>
    <lineage>
        <taxon>Bacteria</taxon>
        <taxon>Pseudomonadati</taxon>
        <taxon>Pseudomonadota</taxon>
        <taxon>Betaproteobacteria</taxon>
        <taxon>Nitrosomonadales</taxon>
        <taxon>Methylophilaceae</taxon>
        <taxon>Methylobacillus</taxon>
    </lineage>
</organism>
<accession>Q1H4M4</accession>